<feature type="initiator methionine" description="Removed" evidence="3">
    <location>
        <position position="1"/>
    </location>
</feature>
<feature type="chain" id="PRO_0000130185" description="Small ribosomal subunit protein uS3">
    <location>
        <begin position="2"/>
        <end position="235"/>
    </location>
</feature>
<feature type="domain" description="KH type-2" evidence="1">
    <location>
        <begin position="39"/>
        <end position="107"/>
    </location>
</feature>
<feature type="region of interest" description="Disordered" evidence="2">
    <location>
        <begin position="215"/>
        <end position="235"/>
    </location>
</feature>
<comment type="function">
    <text evidence="1">Binds the lower part of the 30S subunit head. Binds mRNA in the 70S ribosome, positioning it for translation.</text>
</comment>
<comment type="subunit">
    <text evidence="1">Part of the 30S ribosomal subunit. Forms a tight complex with proteins S10 and S14.</text>
</comment>
<comment type="similarity">
    <text evidence="1">Belongs to the universal ribosomal protein uS3 family.</text>
</comment>
<evidence type="ECO:0000255" key="1">
    <source>
        <dbReference type="HAMAP-Rule" id="MF_01309"/>
    </source>
</evidence>
<evidence type="ECO:0000256" key="2">
    <source>
        <dbReference type="SAM" id="MobiDB-lite"/>
    </source>
</evidence>
<evidence type="ECO:0000305" key="3"/>
<reference key="1">
    <citation type="journal article" date="2004" name="Nat. Biotechnol.">
        <title>Complete genome sequence of the metabolically versatile photosynthetic bacterium Rhodopseudomonas palustris.</title>
        <authorList>
            <person name="Larimer F.W."/>
            <person name="Chain P."/>
            <person name="Hauser L."/>
            <person name="Lamerdin J.E."/>
            <person name="Malfatti S."/>
            <person name="Do L."/>
            <person name="Land M.L."/>
            <person name="Pelletier D.A."/>
            <person name="Beatty J.T."/>
            <person name="Lang A.S."/>
            <person name="Tabita F.R."/>
            <person name="Gibson J.L."/>
            <person name="Hanson T.E."/>
            <person name="Bobst C."/>
            <person name="Torres y Torres J.L."/>
            <person name="Peres C."/>
            <person name="Harrison F.H."/>
            <person name="Gibson J."/>
            <person name="Harwood C.S."/>
        </authorList>
    </citation>
    <scope>NUCLEOTIDE SEQUENCE [LARGE SCALE GENOMIC DNA]</scope>
    <source>
        <strain>ATCC BAA-98 / CGA009</strain>
    </source>
</reference>
<reference key="2">
    <citation type="journal article" date="2004" name="J. Proteome Res.">
        <title>Characterization of the 70S ribosome from Rhodopseudomonas palustris using an integrated 'top-down' and 'bottom-up' mass spectrometric approach.</title>
        <authorList>
            <person name="Strader M.B."/>
            <person name="VerBerkmoes N.C."/>
            <person name="Tabb D.L."/>
            <person name="Connelly H.M."/>
            <person name="Barton J.W."/>
            <person name="Bruce B.D."/>
            <person name="Pelletier D.A."/>
            <person name="Davison B.H."/>
            <person name="Hettich R.L."/>
            <person name="Larimer F.W."/>
            <person name="Hurst G.B."/>
        </authorList>
    </citation>
    <scope>IDENTIFICATION BY MASS SPECTROMETRY</scope>
    <source>
        <strain>ATCC BAA-98 / CGA009</strain>
    </source>
</reference>
<dbReference type="EMBL" id="BX572603">
    <property type="protein sequence ID" value="CAE28685.1"/>
    <property type="molecule type" value="Genomic_DNA"/>
</dbReference>
<dbReference type="RefSeq" id="WP_011158789.1">
    <property type="nucleotide sequence ID" value="NZ_CP116810.1"/>
</dbReference>
<dbReference type="SMR" id="Q6N4U0"/>
<dbReference type="IntAct" id="Q6N4U0">
    <property type="interactions" value="1"/>
</dbReference>
<dbReference type="STRING" id="258594.RPA3244"/>
<dbReference type="GeneID" id="66894330"/>
<dbReference type="eggNOG" id="COG0092">
    <property type="taxonomic scope" value="Bacteria"/>
</dbReference>
<dbReference type="HOGENOM" id="CLU_058591_0_2_5"/>
<dbReference type="PhylomeDB" id="Q6N4U0"/>
<dbReference type="GO" id="GO:0022627">
    <property type="term" value="C:cytosolic small ribosomal subunit"/>
    <property type="evidence" value="ECO:0007669"/>
    <property type="project" value="TreeGrafter"/>
</dbReference>
<dbReference type="GO" id="GO:0003729">
    <property type="term" value="F:mRNA binding"/>
    <property type="evidence" value="ECO:0007669"/>
    <property type="project" value="UniProtKB-UniRule"/>
</dbReference>
<dbReference type="GO" id="GO:0019843">
    <property type="term" value="F:rRNA binding"/>
    <property type="evidence" value="ECO:0007669"/>
    <property type="project" value="UniProtKB-UniRule"/>
</dbReference>
<dbReference type="GO" id="GO:0003735">
    <property type="term" value="F:structural constituent of ribosome"/>
    <property type="evidence" value="ECO:0007669"/>
    <property type="project" value="InterPro"/>
</dbReference>
<dbReference type="GO" id="GO:0006412">
    <property type="term" value="P:translation"/>
    <property type="evidence" value="ECO:0007669"/>
    <property type="project" value="UniProtKB-UniRule"/>
</dbReference>
<dbReference type="CDD" id="cd02412">
    <property type="entry name" value="KH-II_30S_S3"/>
    <property type="match status" value="1"/>
</dbReference>
<dbReference type="FunFam" id="3.30.1140.32:FF:000009">
    <property type="entry name" value="30S ribosomal protein S3"/>
    <property type="match status" value="1"/>
</dbReference>
<dbReference type="FunFam" id="3.30.300.20:FF:000001">
    <property type="entry name" value="30S ribosomal protein S3"/>
    <property type="match status" value="1"/>
</dbReference>
<dbReference type="Gene3D" id="3.30.300.20">
    <property type="match status" value="1"/>
</dbReference>
<dbReference type="Gene3D" id="3.30.1140.32">
    <property type="entry name" value="Ribosomal protein S3, C-terminal domain"/>
    <property type="match status" value="1"/>
</dbReference>
<dbReference type="HAMAP" id="MF_01309_B">
    <property type="entry name" value="Ribosomal_uS3_B"/>
    <property type="match status" value="1"/>
</dbReference>
<dbReference type="InterPro" id="IPR004087">
    <property type="entry name" value="KH_dom"/>
</dbReference>
<dbReference type="InterPro" id="IPR015946">
    <property type="entry name" value="KH_dom-like_a/b"/>
</dbReference>
<dbReference type="InterPro" id="IPR004044">
    <property type="entry name" value="KH_dom_type_2"/>
</dbReference>
<dbReference type="InterPro" id="IPR009019">
    <property type="entry name" value="KH_sf_prok-type"/>
</dbReference>
<dbReference type="InterPro" id="IPR036419">
    <property type="entry name" value="Ribosomal_S3_C_sf"/>
</dbReference>
<dbReference type="InterPro" id="IPR005704">
    <property type="entry name" value="Ribosomal_uS3_bac-typ"/>
</dbReference>
<dbReference type="InterPro" id="IPR001351">
    <property type="entry name" value="Ribosomal_uS3_C"/>
</dbReference>
<dbReference type="InterPro" id="IPR018280">
    <property type="entry name" value="Ribosomal_uS3_CS"/>
</dbReference>
<dbReference type="NCBIfam" id="TIGR01009">
    <property type="entry name" value="rpsC_bact"/>
    <property type="match status" value="1"/>
</dbReference>
<dbReference type="PANTHER" id="PTHR11760">
    <property type="entry name" value="30S/40S RIBOSOMAL PROTEIN S3"/>
    <property type="match status" value="1"/>
</dbReference>
<dbReference type="PANTHER" id="PTHR11760:SF19">
    <property type="entry name" value="SMALL RIBOSOMAL SUBUNIT PROTEIN US3C"/>
    <property type="match status" value="1"/>
</dbReference>
<dbReference type="Pfam" id="PF07650">
    <property type="entry name" value="KH_2"/>
    <property type="match status" value="1"/>
</dbReference>
<dbReference type="Pfam" id="PF00189">
    <property type="entry name" value="Ribosomal_S3_C"/>
    <property type="match status" value="1"/>
</dbReference>
<dbReference type="SMART" id="SM00322">
    <property type="entry name" value="KH"/>
    <property type="match status" value="1"/>
</dbReference>
<dbReference type="SUPFAM" id="SSF54814">
    <property type="entry name" value="Prokaryotic type KH domain (KH-domain type II)"/>
    <property type="match status" value="1"/>
</dbReference>
<dbReference type="SUPFAM" id="SSF54821">
    <property type="entry name" value="Ribosomal protein S3 C-terminal domain"/>
    <property type="match status" value="1"/>
</dbReference>
<dbReference type="PROSITE" id="PS50823">
    <property type="entry name" value="KH_TYPE_2"/>
    <property type="match status" value="1"/>
</dbReference>
<dbReference type="PROSITE" id="PS00548">
    <property type="entry name" value="RIBOSOMAL_S3"/>
    <property type="match status" value="1"/>
</dbReference>
<gene>
    <name evidence="1" type="primary">rpsC</name>
    <name type="ordered locus">RPA3244</name>
</gene>
<proteinExistence type="evidence at protein level"/>
<accession>Q6N4U0</accession>
<protein>
    <recommendedName>
        <fullName evidence="1">Small ribosomal subunit protein uS3</fullName>
    </recommendedName>
    <alternativeName>
        <fullName evidence="3">30S ribosomal protein S3</fullName>
    </alternativeName>
    <alternativeName>
        <fullName>RRP-S3</fullName>
    </alternativeName>
</protein>
<sequence>MGQKINPIGLRLGINRTWDSRWFAGKNEYGKLLHEDVKIREILHKELKQAAVARIVIERPHKKCRVTIHSARPGVVIGKKGADIDKLRKKVADITSSDVVINIVEIRKPELDATLVAESIAQQLERRVAFRRAMKRAVQSAMRLGAEGIRINCSGRLGGAEIARMEWYREGRVPLHTLRADIDYGVATAFTTFGTCGVKVWIFKGEILEHDPMAQDKRMAEGDGGGSSRPRRDAA</sequence>
<name>RS3_RHOPA</name>
<keyword id="KW-0687">Ribonucleoprotein</keyword>
<keyword id="KW-0689">Ribosomal protein</keyword>
<keyword id="KW-0694">RNA-binding</keyword>
<keyword id="KW-0699">rRNA-binding</keyword>
<organism>
    <name type="scientific">Rhodopseudomonas palustris (strain ATCC BAA-98 / CGA009)</name>
    <dbReference type="NCBI Taxonomy" id="258594"/>
    <lineage>
        <taxon>Bacteria</taxon>
        <taxon>Pseudomonadati</taxon>
        <taxon>Pseudomonadota</taxon>
        <taxon>Alphaproteobacteria</taxon>
        <taxon>Hyphomicrobiales</taxon>
        <taxon>Nitrobacteraceae</taxon>
        <taxon>Rhodopseudomonas</taxon>
    </lineage>
</organism>